<comment type="function">
    <text evidence="1">Myotropic peptide.</text>
</comment>
<comment type="subcellular location">
    <subcellularLocation>
        <location evidence="5">Secreted</location>
    </subcellularLocation>
</comment>
<comment type="similarity">
    <text evidence="2">Belongs to the gastrin/cholecystokinin family.</text>
</comment>
<dbReference type="GO" id="GO:0005576">
    <property type="term" value="C:extracellular region"/>
    <property type="evidence" value="ECO:0007669"/>
    <property type="project" value="UniProtKB-SubCell"/>
</dbReference>
<dbReference type="GO" id="GO:0005179">
    <property type="term" value="F:hormone activity"/>
    <property type="evidence" value="ECO:0007669"/>
    <property type="project" value="UniProtKB-KW"/>
</dbReference>
<dbReference type="GO" id="GO:0007218">
    <property type="term" value="P:neuropeptide signaling pathway"/>
    <property type="evidence" value="ECO:0007669"/>
    <property type="project" value="UniProtKB-KW"/>
</dbReference>
<dbReference type="InterPro" id="IPR013152">
    <property type="entry name" value="Gastrin/cholecystokinin_CS"/>
</dbReference>
<dbReference type="InterPro" id="IPR013259">
    <property type="entry name" value="Sulfakinin"/>
</dbReference>
<dbReference type="Pfam" id="PF08257">
    <property type="entry name" value="Sulfakinin"/>
    <property type="match status" value="1"/>
</dbReference>
<dbReference type="PROSITE" id="PS00259">
    <property type="entry name" value="GASTRIN"/>
    <property type="match status" value="1"/>
</dbReference>
<name>SK1_CRYDW</name>
<feature type="peptide" id="PRO_0000378866" description="Sulfakinin-1" evidence="3">
    <location>
        <begin position="1"/>
        <end position="11"/>
    </location>
</feature>
<feature type="modified residue" description="Sulfotyrosine" evidence="1">
    <location>
        <position position="6"/>
    </location>
</feature>
<feature type="modified residue" description="Phenylalanine amide" evidence="3">
    <location>
        <position position="11"/>
    </location>
</feature>
<sequence length="11" mass="1445">EQFDDYGHMRF</sequence>
<accession>P85571</accession>
<evidence type="ECO:0000250" key="1">
    <source>
        <dbReference type="UniProtKB" id="P41493"/>
    </source>
</evidence>
<evidence type="ECO:0000255" key="2"/>
<evidence type="ECO:0000269" key="3">
    <source>
    </source>
</evidence>
<evidence type="ECO:0000303" key="4">
    <source>
    </source>
</evidence>
<evidence type="ECO:0000305" key="5"/>
<reference evidence="5" key="1">
    <citation type="journal article" date="2009" name="BMC Evol. Biol.">
        <title>A proteomic approach for studying insect phylogeny: CAPA peptides of ancient insect taxa (Dictyoptera, Blattoptera) as a test case.</title>
        <authorList>
            <person name="Roth S."/>
            <person name="Fromm B."/>
            <person name="Gaede G."/>
            <person name="Predel R."/>
        </authorList>
    </citation>
    <scope>PROTEIN SEQUENCE</scope>
    <scope>AMIDATION AT PHE-11</scope>
    <source>
        <tissue evidence="3">Corpora cardiaca</tissue>
    </source>
</reference>
<keyword id="KW-0027">Amidation</keyword>
<keyword id="KW-0903">Direct protein sequencing</keyword>
<keyword id="KW-0372">Hormone</keyword>
<keyword id="KW-0527">Neuropeptide</keyword>
<keyword id="KW-0964">Secreted</keyword>
<keyword id="KW-0765">Sulfation</keyword>
<organism>
    <name type="scientific">Cryptocercus darwini</name>
    <name type="common">Brown-hooded cockroach</name>
    <dbReference type="NCBI Taxonomy" id="89835"/>
    <lineage>
        <taxon>Eukaryota</taxon>
        <taxon>Metazoa</taxon>
        <taxon>Ecdysozoa</taxon>
        <taxon>Arthropoda</taxon>
        <taxon>Hexapoda</taxon>
        <taxon>Insecta</taxon>
        <taxon>Pterygota</taxon>
        <taxon>Neoptera</taxon>
        <taxon>Polyneoptera</taxon>
        <taxon>Dictyoptera</taxon>
        <taxon>Blattodea</taxon>
        <taxon>Blattoidea</taxon>
        <taxon>Cryptocercidae</taxon>
        <taxon>Cryptocercus</taxon>
    </lineage>
</organism>
<protein>
    <recommendedName>
        <fullName evidence="4">Sulfakinin-1</fullName>
        <shortName evidence="4">CryDa-SK-1</shortName>
    </recommendedName>
</protein>
<proteinExistence type="evidence at protein level"/>